<dbReference type="EMBL" id="CP000509">
    <property type="protein sequence ID" value="ABL82692.1"/>
    <property type="molecule type" value="Genomic_DNA"/>
</dbReference>
<dbReference type="RefSeq" id="WP_011756626.1">
    <property type="nucleotide sequence ID" value="NC_008699.1"/>
</dbReference>
<dbReference type="SMR" id="A1SLK7"/>
<dbReference type="STRING" id="196162.Noca_3190"/>
<dbReference type="KEGG" id="nca:Noca_3190"/>
<dbReference type="eggNOG" id="COG0532">
    <property type="taxonomic scope" value="Bacteria"/>
</dbReference>
<dbReference type="HOGENOM" id="CLU_006301_9_4_11"/>
<dbReference type="OrthoDB" id="9811804at2"/>
<dbReference type="Proteomes" id="UP000000640">
    <property type="component" value="Chromosome"/>
</dbReference>
<dbReference type="GO" id="GO:0005829">
    <property type="term" value="C:cytosol"/>
    <property type="evidence" value="ECO:0007669"/>
    <property type="project" value="TreeGrafter"/>
</dbReference>
<dbReference type="GO" id="GO:0005525">
    <property type="term" value="F:GTP binding"/>
    <property type="evidence" value="ECO:0007669"/>
    <property type="project" value="UniProtKB-KW"/>
</dbReference>
<dbReference type="GO" id="GO:0003924">
    <property type="term" value="F:GTPase activity"/>
    <property type="evidence" value="ECO:0007669"/>
    <property type="project" value="UniProtKB-UniRule"/>
</dbReference>
<dbReference type="GO" id="GO:0003743">
    <property type="term" value="F:translation initiation factor activity"/>
    <property type="evidence" value="ECO:0007669"/>
    <property type="project" value="UniProtKB-UniRule"/>
</dbReference>
<dbReference type="CDD" id="cd01887">
    <property type="entry name" value="IF2_eIF5B"/>
    <property type="match status" value="1"/>
</dbReference>
<dbReference type="CDD" id="cd03702">
    <property type="entry name" value="IF2_mtIF2_II"/>
    <property type="match status" value="1"/>
</dbReference>
<dbReference type="CDD" id="cd03692">
    <property type="entry name" value="mtIF2_IVc"/>
    <property type="match status" value="1"/>
</dbReference>
<dbReference type="FunFam" id="2.40.30.10:FF:000007">
    <property type="entry name" value="Translation initiation factor IF-2"/>
    <property type="match status" value="1"/>
</dbReference>
<dbReference type="FunFam" id="2.40.30.10:FF:000008">
    <property type="entry name" value="Translation initiation factor IF-2"/>
    <property type="match status" value="1"/>
</dbReference>
<dbReference type="FunFam" id="3.40.50.10050:FF:000001">
    <property type="entry name" value="Translation initiation factor IF-2"/>
    <property type="match status" value="1"/>
</dbReference>
<dbReference type="FunFam" id="3.40.50.300:FF:000019">
    <property type="entry name" value="Translation initiation factor IF-2"/>
    <property type="match status" value="1"/>
</dbReference>
<dbReference type="Gene3D" id="1.10.10.2480">
    <property type="match status" value="1"/>
</dbReference>
<dbReference type="Gene3D" id="3.40.50.300">
    <property type="entry name" value="P-loop containing nucleotide triphosphate hydrolases"/>
    <property type="match status" value="1"/>
</dbReference>
<dbReference type="Gene3D" id="2.40.30.10">
    <property type="entry name" value="Translation factors"/>
    <property type="match status" value="2"/>
</dbReference>
<dbReference type="Gene3D" id="3.40.50.10050">
    <property type="entry name" value="Translation initiation factor IF- 2, domain 3"/>
    <property type="match status" value="1"/>
</dbReference>
<dbReference type="HAMAP" id="MF_00100_B">
    <property type="entry name" value="IF_2_B"/>
    <property type="match status" value="1"/>
</dbReference>
<dbReference type="InterPro" id="IPR053905">
    <property type="entry name" value="EF-G-like_DII"/>
</dbReference>
<dbReference type="InterPro" id="IPR044145">
    <property type="entry name" value="IF2_II"/>
</dbReference>
<dbReference type="InterPro" id="IPR006847">
    <property type="entry name" value="IF2_N"/>
</dbReference>
<dbReference type="InterPro" id="IPR027417">
    <property type="entry name" value="P-loop_NTPase"/>
</dbReference>
<dbReference type="InterPro" id="IPR005225">
    <property type="entry name" value="Small_GTP-bd"/>
</dbReference>
<dbReference type="InterPro" id="IPR000795">
    <property type="entry name" value="T_Tr_GTP-bd_dom"/>
</dbReference>
<dbReference type="InterPro" id="IPR000178">
    <property type="entry name" value="TF_IF2_bacterial-like"/>
</dbReference>
<dbReference type="InterPro" id="IPR015760">
    <property type="entry name" value="TIF_IF2"/>
</dbReference>
<dbReference type="InterPro" id="IPR023115">
    <property type="entry name" value="TIF_IF2_dom3"/>
</dbReference>
<dbReference type="InterPro" id="IPR036925">
    <property type="entry name" value="TIF_IF2_dom3_sf"/>
</dbReference>
<dbReference type="InterPro" id="IPR009000">
    <property type="entry name" value="Transl_B-barrel_sf"/>
</dbReference>
<dbReference type="NCBIfam" id="TIGR00487">
    <property type="entry name" value="IF-2"/>
    <property type="match status" value="1"/>
</dbReference>
<dbReference type="NCBIfam" id="TIGR00231">
    <property type="entry name" value="small_GTP"/>
    <property type="match status" value="1"/>
</dbReference>
<dbReference type="PANTHER" id="PTHR43381:SF5">
    <property type="entry name" value="TR-TYPE G DOMAIN-CONTAINING PROTEIN"/>
    <property type="match status" value="1"/>
</dbReference>
<dbReference type="PANTHER" id="PTHR43381">
    <property type="entry name" value="TRANSLATION INITIATION FACTOR IF-2-RELATED"/>
    <property type="match status" value="1"/>
</dbReference>
<dbReference type="Pfam" id="PF22042">
    <property type="entry name" value="EF-G_D2"/>
    <property type="match status" value="1"/>
</dbReference>
<dbReference type="Pfam" id="PF00009">
    <property type="entry name" value="GTP_EFTU"/>
    <property type="match status" value="1"/>
</dbReference>
<dbReference type="Pfam" id="PF11987">
    <property type="entry name" value="IF-2"/>
    <property type="match status" value="1"/>
</dbReference>
<dbReference type="Pfam" id="PF04760">
    <property type="entry name" value="IF2_N"/>
    <property type="match status" value="2"/>
</dbReference>
<dbReference type="PRINTS" id="PR00315">
    <property type="entry name" value="ELONGATNFCT"/>
</dbReference>
<dbReference type="SUPFAM" id="SSF52156">
    <property type="entry name" value="Initiation factor IF2/eIF5b, domain 3"/>
    <property type="match status" value="1"/>
</dbReference>
<dbReference type="SUPFAM" id="SSF52540">
    <property type="entry name" value="P-loop containing nucleoside triphosphate hydrolases"/>
    <property type="match status" value="1"/>
</dbReference>
<dbReference type="SUPFAM" id="SSF50447">
    <property type="entry name" value="Translation proteins"/>
    <property type="match status" value="2"/>
</dbReference>
<dbReference type="PROSITE" id="PS51722">
    <property type="entry name" value="G_TR_2"/>
    <property type="match status" value="1"/>
</dbReference>
<dbReference type="PROSITE" id="PS01176">
    <property type="entry name" value="IF2"/>
    <property type="match status" value="1"/>
</dbReference>
<comment type="function">
    <text evidence="2">One of the essential components for the initiation of protein synthesis. Protects formylmethionyl-tRNA from spontaneous hydrolysis and promotes its binding to the 30S ribosomal subunits. Also involved in the hydrolysis of GTP during the formation of the 70S ribosomal complex.</text>
</comment>
<comment type="subcellular location">
    <subcellularLocation>
        <location evidence="2">Cytoplasm</location>
    </subcellularLocation>
</comment>
<comment type="similarity">
    <text evidence="2">Belongs to the TRAFAC class translation factor GTPase superfamily. Classic translation factor GTPase family. IF-2 subfamily.</text>
</comment>
<proteinExistence type="inferred from homology"/>
<sequence length="938" mass="98291">MAKTRVHELAKEFGVESKFVLEKFKEMGEFVKSASSTVELPAEMRFRKEYGEKLKAEASAAPAAPAEKPAAKKAPAKKAAATAEPEALAAEPAAEPAAAEAPAAAEAEAPAAKAAAPKPGPKPAPVAEQPAPPAEPEAPEAPEAPAASAAPAAPKAPAPRPVGRPGAPRPGNNPFASSQGMGRRPAPGAPAAPGAGDNRPPRPPAAREGGVPGRPGMPRPNPAMMPKSPSAFGAGPGGRGPARPGAPGRGGAPGRGGAPGRGGVGTGAPGRGGAPGGGFGPSGGGRPGGGRPGQRGQTQGAFGRPGGPSRRGRKSKRARRQEFEAMEAPTIGGIRVRKGNGETVRLPRGASLTDFAERINVEPAQLVQMLFSLGEMVTATESVNDETLELLGEELNYVVEVVSPEDEDRELLESFDIEFADDEDDEGHFEARPPVVTVMGHVDHGKTKLLDALRHANVASGEAGGITQHIGAYQVHTDVDGEDRKITFIDTPGHEAFTAMRARGSQSSDIAVLVVAADDGVMPQTVEALNHAKAAGVPIVVAVNKIDKPEADPTKVRGQLTEYGLVPEEYGGDTMFVDVSAKSELNLDKLLEAVVLTADASLDLRANPNRDAQGLVIEAHLDRGRGPVATILVQRGTLHVGDSIVAGPAHGRVRAMLDEYGNELTEATPSRPAMVLGLSTVPGAGQNFIVVEDDRMARQIAEKREARERAAMQAKRRVRRTLEDFMASMEKGESQELNLILKGDVSGSVEALEDALAKIDVGDDVSLRVIDRGVGAITETNVDLAAASDAIIIGFNVRPQGKATELADREGVEIRYYTVIYQAIEEIEAALKGMLKPEFEESTLGQAEIRAIFRSSKVGNIAGCMVISGVIRRNAKVRVIRDGAVVADNLDLASLKREKDDASEVREGFECGLVLRNFQDIKEGDIVEAFEMREIPRA</sequence>
<name>IF2_NOCSJ</name>
<organism>
    <name type="scientific">Nocardioides sp. (strain ATCC BAA-499 / JS614)</name>
    <dbReference type="NCBI Taxonomy" id="196162"/>
    <lineage>
        <taxon>Bacteria</taxon>
        <taxon>Bacillati</taxon>
        <taxon>Actinomycetota</taxon>
        <taxon>Actinomycetes</taxon>
        <taxon>Propionibacteriales</taxon>
        <taxon>Nocardioidaceae</taxon>
        <taxon>Nocardioides</taxon>
    </lineage>
</organism>
<evidence type="ECO:0000250" key="1"/>
<evidence type="ECO:0000255" key="2">
    <source>
        <dbReference type="HAMAP-Rule" id="MF_00100"/>
    </source>
</evidence>
<evidence type="ECO:0000256" key="3">
    <source>
        <dbReference type="SAM" id="MobiDB-lite"/>
    </source>
</evidence>
<accession>A1SLK7</accession>
<protein>
    <recommendedName>
        <fullName evidence="2">Translation initiation factor IF-2</fullName>
    </recommendedName>
</protein>
<gene>
    <name evidence="2" type="primary">infB</name>
    <name type="ordered locus">Noca_3190</name>
</gene>
<feature type="chain" id="PRO_1000008290" description="Translation initiation factor IF-2">
    <location>
        <begin position="1"/>
        <end position="938"/>
    </location>
</feature>
<feature type="domain" description="tr-type G">
    <location>
        <begin position="431"/>
        <end position="603"/>
    </location>
</feature>
<feature type="region of interest" description="Disordered" evidence="3">
    <location>
        <begin position="55"/>
        <end position="322"/>
    </location>
</feature>
<feature type="region of interest" description="G1" evidence="1">
    <location>
        <begin position="440"/>
        <end position="447"/>
    </location>
</feature>
<feature type="region of interest" description="G2" evidence="1">
    <location>
        <begin position="465"/>
        <end position="469"/>
    </location>
</feature>
<feature type="region of interest" description="G3" evidence="1">
    <location>
        <begin position="490"/>
        <end position="493"/>
    </location>
</feature>
<feature type="region of interest" description="G4" evidence="1">
    <location>
        <begin position="544"/>
        <end position="547"/>
    </location>
</feature>
<feature type="region of interest" description="G5" evidence="1">
    <location>
        <begin position="580"/>
        <end position="582"/>
    </location>
</feature>
<feature type="compositionally biased region" description="Low complexity" evidence="3">
    <location>
        <begin position="57"/>
        <end position="68"/>
    </location>
</feature>
<feature type="compositionally biased region" description="Low complexity" evidence="3">
    <location>
        <begin position="77"/>
        <end position="117"/>
    </location>
</feature>
<feature type="compositionally biased region" description="Pro residues" evidence="3">
    <location>
        <begin position="118"/>
        <end position="136"/>
    </location>
</feature>
<feature type="compositionally biased region" description="Low complexity" evidence="3">
    <location>
        <begin position="141"/>
        <end position="153"/>
    </location>
</feature>
<feature type="compositionally biased region" description="Low complexity" evidence="3">
    <location>
        <begin position="180"/>
        <end position="198"/>
    </location>
</feature>
<feature type="compositionally biased region" description="Low complexity" evidence="3">
    <location>
        <begin position="224"/>
        <end position="233"/>
    </location>
</feature>
<feature type="compositionally biased region" description="Gly residues" evidence="3">
    <location>
        <begin position="247"/>
        <end position="293"/>
    </location>
</feature>
<feature type="compositionally biased region" description="Basic residues" evidence="3">
    <location>
        <begin position="310"/>
        <end position="319"/>
    </location>
</feature>
<feature type="binding site" evidence="2">
    <location>
        <begin position="440"/>
        <end position="447"/>
    </location>
    <ligand>
        <name>GTP</name>
        <dbReference type="ChEBI" id="CHEBI:37565"/>
    </ligand>
</feature>
<feature type="binding site" evidence="2">
    <location>
        <begin position="490"/>
        <end position="494"/>
    </location>
    <ligand>
        <name>GTP</name>
        <dbReference type="ChEBI" id="CHEBI:37565"/>
    </ligand>
</feature>
<feature type="binding site" evidence="2">
    <location>
        <begin position="544"/>
        <end position="547"/>
    </location>
    <ligand>
        <name>GTP</name>
        <dbReference type="ChEBI" id="CHEBI:37565"/>
    </ligand>
</feature>
<reference key="1">
    <citation type="submission" date="2006-12" db="EMBL/GenBank/DDBJ databases">
        <title>Complete sequence of chromosome 1 of Nocardioides sp. JS614.</title>
        <authorList>
            <person name="Copeland A."/>
            <person name="Lucas S."/>
            <person name="Lapidus A."/>
            <person name="Barry K."/>
            <person name="Detter J.C."/>
            <person name="Glavina del Rio T."/>
            <person name="Hammon N."/>
            <person name="Israni S."/>
            <person name="Dalin E."/>
            <person name="Tice H."/>
            <person name="Pitluck S."/>
            <person name="Thompson L.S."/>
            <person name="Brettin T."/>
            <person name="Bruce D."/>
            <person name="Han C."/>
            <person name="Tapia R."/>
            <person name="Schmutz J."/>
            <person name="Larimer F."/>
            <person name="Land M."/>
            <person name="Hauser L."/>
            <person name="Kyrpides N."/>
            <person name="Kim E."/>
            <person name="Mattes T."/>
            <person name="Gossett J."/>
            <person name="Richardson P."/>
        </authorList>
    </citation>
    <scope>NUCLEOTIDE SEQUENCE [LARGE SCALE GENOMIC DNA]</scope>
    <source>
        <strain>ATCC BAA-499 / JS614</strain>
    </source>
</reference>
<keyword id="KW-0963">Cytoplasm</keyword>
<keyword id="KW-0342">GTP-binding</keyword>
<keyword id="KW-0396">Initiation factor</keyword>
<keyword id="KW-0547">Nucleotide-binding</keyword>
<keyword id="KW-0648">Protein biosynthesis</keyword>
<keyword id="KW-1185">Reference proteome</keyword>